<name>MOCOS_PYRO7</name>
<gene>
    <name evidence="2" type="primary">hxB</name>
    <name type="ORF">MGG_01613</name>
</gene>
<comment type="function">
    <text evidence="2">Sulfurates the molybdenum cofactor. Sulfation of molybdenum is essential for xanthine dehydrogenase (XDH) and aldehyde oxidase (ADO) enzymes in which molybdenum cofactor is liganded by 1 oxygen and 1 sulfur atom in active form.</text>
</comment>
<comment type="catalytic activity">
    <reaction evidence="2">
        <text>Mo-molybdopterin + L-cysteine + AH2 = thio-Mo-molybdopterin + L-alanine + A + H2O</text>
        <dbReference type="Rhea" id="RHEA:42636"/>
        <dbReference type="ChEBI" id="CHEBI:13193"/>
        <dbReference type="ChEBI" id="CHEBI:15377"/>
        <dbReference type="ChEBI" id="CHEBI:17499"/>
        <dbReference type="ChEBI" id="CHEBI:35235"/>
        <dbReference type="ChEBI" id="CHEBI:57972"/>
        <dbReference type="ChEBI" id="CHEBI:71302"/>
        <dbReference type="ChEBI" id="CHEBI:82685"/>
        <dbReference type="EC" id="2.8.1.9"/>
    </reaction>
</comment>
<comment type="cofactor">
    <cofactor evidence="2">
        <name>pyridoxal 5'-phosphate</name>
        <dbReference type="ChEBI" id="CHEBI:597326"/>
    </cofactor>
</comment>
<comment type="pathway">
    <text evidence="1">Cofactor biosynthesis; molybdopterin biosynthesis.</text>
</comment>
<comment type="similarity">
    <text evidence="2">Belongs to the class-V pyridoxal-phosphate-dependent aminotransferase family. MOCOS subfamily.</text>
</comment>
<protein>
    <recommendedName>
        <fullName evidence="2">Molybdenum cofactor sulfurase</fullName>
        <shortName evidence="2">MCS</shortName>
        <shortName evidence="2">MOS</shortName>
        <shortName evidence="2">MoCo sulfurase</shortName>
        <ecNumber evidence="2">2.8.1.9</ecNumber>
    </recommendedName>
    <alternativeName>
        <fullName evidence="2">Molybdenum cofactor sulfurtransferase</fullName>
    </alternativeName>
</protein>
<dbReference type="EC" id="2.8.1.9" evidence="2"/>
<dbReference type="EMBL" id="CM001232">
    <property type="protein sequence ID" value="EHA54790.1"/>
    <property type="molecule type" value="Genomic_DNA"/>
</dbReference>
<dbReference type="RefSeq" id="XP_003714597.1">
    <property type="nucleotide sequence ID" value="XM_003714549.1"/>
</dbReference>
<dbReference type="SMR" id="A4RK48"/>
<dbReference type="STRING" id="242507.A4RK48"/>
<dbReference type="EnsemblFungi" id="MGG_01613T0">
    <property type="protein sequence ID" value="MGG_01613T0"/>
    <property type="gene ID" value="MGG_01613"/>
</dbReference>
<dbReference type="GeneID" id="2679314"/>
<dbReference type="KEGG" id="mgr:MGG_01613"/>
<dbReference type="VEuPathDB" id="FungiDB:MGG_01613"/>
<dbReference type="eggNOG" id="KOG2142">
    <property type="taxonomic scope" value="Eukaryota"/>
</dbReference>
<dbReference type="HOGENOM" id="CLU_010913_0_0_1"/>
<dbReference type="InParanoid" id="A4RK48"/>
<dbReference type="OMA" id="PCTRCQM"/>
<dbReference type="OrthoDB" id="10264306at2759"/>
<dbReference type="UniPathway" id="UPA00344"/>
<dbReference type="Proteomes" id="UP000009058">
    <property type="component" value="Chromosome 2"/>
</dbReference>
<dbReference type="GO" id="GO:0016829">
    <property type="term" value="F:lyase activity"/>
    <property type="evidence" value="ECO:0007669"/>
    <property type="project" value="UniProtKB-UniRule"/>
</dbReference>
<dbReference type="GO" id="GO:0008265">
    <property type="term" value="F:molybdenum cofactor sulfurtransferase activity"/>
    <property type="evidence" value="ECO:0007669"/>
    <property type="project" value="UniProtKB-UniRule"/>
</dbReference>
<dbReference type="GO" id="GO:0030151">
    <property type="term" value="F:molybdenum ion binding"/>
    <property type="evidence" value="ECO:0007669"/>
    <property type="project" value="UniProtKB-UniRule"/>
</dbReference>
<dbReference type="GO" id="GO:0030170">
    <property type="term" value="F:pyridoxal phosphate binding"/>
    <property type="evidence" value="ECO:0007669"/>
    <property type="project" value="UniProtKB-UniRule"/>
</dbReference>
<dbReference type="GO" id="GO:0006777">
    <property type="term" value="P:Mo-molybdopterin cofactor biosynthetic process"/>
    <property type="evidence" value="ECO:0007669"/>
    <property type="project" value="UniProtKB-UniRule"/>
</dbReference>
<dbReference type="Gene3D" id="3.40.640.10">
    <property type="entry name" value="Type I PLP-dependent aspartate aminotransferase-like (Major domain)"/>
    <property type="match status" value="1"/>
</dbReference>
<dbReference type="HAMAP" id="MF_03050">
    <property type="entry name" value="MOCOS"/>
    <property type="match status" value="1"/>
</dbReference>
<dbReference type="InterPro" id="IPR000192">
    <property type="entry name" value="Aminotrans_V_dom"/>
</dbReference>
<dbReference type="InterPro" id="IPR005302">
    <property type="entry name" value="MoCF_Sase_C"/>
</dbReference>
<dbReference type="InterPro" id="IPR028886">
    <property type="entry name" value="MoCo_sulfurase"/>
</dbReference>
<dbReference type="InterPro" id="IPR005303">
    <property type="entry name" value="MOCOS_middle"/>
</dbReference>
<dbReference type="InterPro" id="IPR015424">
    <property type="entry name" value="PyrdxlP-dep_Trfase"/>
</dbReference>
<dbReference type="InterPro" id="IPR015421">
    <property type="entry name" value="PyrdxlP-dep_Trfase_major"/>
</dbReference>
<dbReference type="PANTHER" id="PTHR14237:SF19">
    <property type="entry name" value="MITOCHONDRIAL AMIDOXIME REDUCING COMPONENT 1"/>
    <property type="match status" value="1"/>
</dbReference>
<dbReference type="PANTHER" id="PTHR14237">
    <property type="entry name" value="MOLYBDOPTERIN COFACTOR SULFURASE MOSC"/>
    <property type="match status" value="1"/>
</dbReference>
<dbReference type="Pfam" id="PF00266">
    <property type="entry name" value="Aminotran_5"/>
    <property type="match status" value="1"/>
</dbReference>
<dbReference type="Pfam" id="PF03473">
    <property type="entry name" value="MOSC"/>
    <property type="match status" value="1"/>
</dbReference>
<dbReference type="Pfam" id="PF03476">
    <property type="entry name" value="MOSC_N"/>
    <property type="match status" value="1"/>
</dbReference>
<dbReference type="SUPFAM" id="SSF141673">
    <property type="entry name" value="MOSC N-terminal domain-like"/>
    <property type="match status" value="1"/>
</dbReference>
<dbReference type="SUPFAM" id="SSF53383">
    <property type="entry name" value="PLP-dependent transferases"/>
    <property type="match status" value="1"/>
</dbReference>
<dbReference type="PROSITE" id="PS51340">
    <property type="entry name" value="MOSC"/>
    <property type="match status" value="1"/>
</dbReference>
<proteinExistence type="inferred from homology"/>
<organism>
    <name type="scientific">Pyricularia oryzae (strain 70-15 / ATCC MYA-4617 / FGSC 8958)</name>
    <name type="common">Rice blast fungus</name>
    <name type="synonym">Magnaporthe oryzae</name>
    <dbReference type="NCBI Taxonomy" id="242507"/>
    <lineage>
        <taxon>Eukaryota</taxon>
        <taxon>Fungi</taxon>
        <taxon>Dikarya</taxon>
        <taxon>Ascomycota</taxon>
        <taxon>Pezizomycotina</taxon>
        <taxon>Sordariomycetes</taxon>
        <taxon>Sordariomycetidae</taxon>
        <taxon>Magnaporthales</taxon>
        <taxon>Pyriculariaceae</taxon>
        <taxon>Pyricularia</taxon>
    </lineage>
</organism>
<feature type="chain" id="PRO_0000369384" description="Molybdenum cofactor sulfurase">
    <location>
        <begin position="1"/>
        <end position="842"/>
    </location>
</feature>
<feature type="domain" description="MOSC" evidence="2">
    <location>
        <begin position="663"/>
        <end position="831"/>
    </location>
</feature>
<feature type="region of interest" description="Disordered" evidence="3">
    <location>
        <begin position="637"/>
        <end position="680"/>
    </location>
</feature>
<feature type="active site" evidence="2">
    <location>
        <position position="402"/>
    </location>
</feature>
<feature type="modified residue" description="N6-(pyridoxal phosphate)lysine" evidence="2">
    <location>
        <position position="236"/>
    </location>
</feature>
<sequence>MAQNLDAQYNAAVERFRSEEFPMIRVDSIYLDHAGTTLCPKSLLEAFARDMAGNLYGNPHSASNSSQLSTSRIEDIRLQALQLFGASPDEFDLVFVANATAGIKLVSESLRARDGGFGFLYHQASHTSLVGVREEAQSSICLSEDETEELLAGSTTSLDLVTRSPPGAVLLAYTAQSNFDGRRYPLTWADKVRRAHASGCTPICTLLDAASFVSTSPLHLGESKAAPDFTVLSFYKIFGFPDLGALIVRKQAWHLFESRKYFGGGTVDMVVNFKESWHAPKNGFLHERLEDGTLPIHNILALGSAIKIHQGLFGPMRTVSSHATFLAQEMITNLQNLHHSNGEKVCTLYSPYPKPNVDGNGWNQGPIIAFNICTSNGSWVSLGEFEKLASLRDINIRTGSLCNPGGIAIALALEPWEMKRNFSAGLRCGADNDMALGKPTGVIRASLGAMSTTSDVDRFVAFIVEFFCDDGAASRDLQTPRVQPSLASGEAELCVDSLTIYPIKSCAGYSIPHGKQWQVRPEGLAWDREWCLLHRGSGQALSQKRYPKMALIKPVVDLESGRLAVGYLGEPIPYLPERVSVPLSHDPSVFRPSTYVSAAPSRVCGDQVATKIYHDDELNEFFSKAIGVPCVLARFPPGSQHGDAQRSSKARLQKHQITTDQESDVQEVHPGSGTTTDSTWGNDKSQNILLSNESPILLINLASVDALNQEIKSRKGSSAVRIPTSAFRANVVLRRTDESRPDGAQGLPYAEERWRGLTIGNQTYTMLGACRRCQMVCVDQVTGCRGDEPFSTLSKTRRFDGKVFFGVHMAWGPGSPSNNVVAARGDVAYPTIEVGERVLVHV</sequence>
<keyword id="KW-0501">Molybdenum cofactor biosynthesis</keyword>
<keyword id="KW-0663">Pyridoxal phosphate</keyword>
<keyword id="KW-1185">Reference proteome</keyword>
<keyword id="KW-0808">Transferase</keyword>
<accession>A4RK48</accession>
<accession>G4MTZ6</accession>
<evidence type="ECO:0000250" key="1">
    <source>
        <dbReference type="UniProtKB" id="Q96EN8"/>
    </source>
</evidence>
<evidence type="ECO:0000255" key="2">
    <source>
        <dbReference type="HAMAP-Rule" id="MF_03050"/>
    </source>
</evidence>
<evidence type="ECO:0000256" key="3">
    <source>
        <dbReference type="SAM" id="MobiDB-lite"/>
    </source>
</evidence>
<reference key="1">
    <citation type="journal article" date="2005" name="Nature">
        <title>The genome sequence of the rice blast fungus Magnaporthe grisea.</title>
        <authorList>
            <person name="Dean R.A."/>
            <person name="Talbot N.J."/>
            <person name="Ebbole D.J."/>
            <person name="Farman M.L."/>
            <person name="Mitchell T.K."/>
            <person name="Orbach M.J."/>
            <person name="Thon M.R."/>
            <person name="Kulkarni R."/>
            <person name="Xu J.-R."/>
            <person name="Pan H."/>
            <person name="Read N.D."/>
            <person name="Lee Y.-H."/>
            <person name="Carbone I."/>
            <person name="Brown D."/>
            <person name="Oh Y.Y."/>
            <person name="Donofrio N."/>
            <person name="Jeong J.S."/>
            <person name="Soanes D.M."/>
            <person name="Djonovic S."/>
            <person name="Kolomiets E."/>
            <person name="Rehmeyer C."/>
            <person name="Li W."/>
            <person name="Harding M."/>
            <person name="Kim S."/>
            <person name="Lebrun M.-H."/>
            <person name="Bohnert H."/>
            <person name="Coughlan S."/>
            <person name="Butler J."/>
            <person name="Calvo S.E."/>
            <person name="Ma L.-J."/>
            <person name="Nicol R."/>
            <person name="Purcell S."/>
            <person name="Nusbaum C."/>
            <person name="Galagan J.E."/>
            <person name="Birren B.W."/>
        </authorList>
    </citation>
    <scope>NUCLEOTIDE SEQUENCE [LARGE SCALE GENOMIC DNA]</scope>
    <source>
        <strain>70-15 / ATCC MYA-4617 / FGSC 8958</strain>
    </source>
</reference>